<protein>
    <recommendedName>
        <fullName evidence="2">Aspartate carbamoyltransferase regulatory chain</fullName>
    </recommendedName>
</protein>
<dbReference type="EMBL" id="AE005674">
    <property type="protein sequence ID" value="AAN45664.2"/>
    <property type="molecule type" value="Genomic_DNA"/>
</dbReference>
<dbReference type="EMBL" id="AE014073">
    <property type="protein sequence ID" value="AAP19452.1"/>
    <property type="molecule type" value="Genomic_DNA"/>
</dbReference>
<dbReference type="RefSeq" id="NP_709957.2">
    <property type="nucleotide sequence ID" value="NC_004337.2"/>
</dbReference>
<dbReference type="RefSeq" id="WP_000148585.1">
    <property type="nucleotide sequence ID" value="NZ_WPGW01000068.1"/>
</dbReference>
<dbReference type="SMR" id="Q83IL8"/>
<dbReference type="STRING" id="198214.SF4246"/>
<dbReference type="PaxDb" id="198214-SF4246"/>
<dbReference type="GeneID" id="1025418"/>
<dbReference type="KEGG" id="sfl:SF4246"/>
<dbReference type="KEGG" id="sfx:S4508"/>
<dbReference type="PATRIC" id="fig|198214.7.peg.5006"/>
<dbReference type="HOGENOM" id="CLU_128576_0_0_6"/>
<dbReference type="Proteomes" id="UP000001006">
    <property type="component" value="Chromosome"/>
</dbReference>
<dbReference type="Proteomes" id="UP000002673">
    <property type="component" value="Chromosome"/>
</dbReference>
<dbReference type="GO" id="GO:0009347">
    <property type="term" value="C:aspartate carbamoyltransferase complex"/>
    <property type="evidence" value="ECO:0007669"/>
    <property type="project" value="InterPro"/>
</dbReference>
<dbReference type="GO" id="GO:0046872">
    <property type="term" value="F:metal ion binding"/>
    <property type="evidence" value="ECO:0007669"/>
    <property type="project" value="UniProtKB-KW"/>
</dbReference>
<dbReference type="GO" id="GO:0006207">
    <property type="term" value="P:'de novo' pyrimidine nucleobase biosynthetic process"/>
    <property type="evidence" value="ECO:0007669"/>
    <property type="project" value="InterPro"/>
</dbReference>
<dbReference type="GO" id="GO:0006221">
    <property type="term" value="P:pyrimidine nucleotide biosynthetic process"/>
    <property type="evidence" value="ECO:0007669"/>
    <property type="project" value="UniProtKB-UniRule"/>
</dbReference>
<dbReference type="FunFam" id="2.30.30.20:FF:000001">
    <property type="entry name" value="Aspartate carbamoyltransferase regulatory chain"/>
    <property type="match status" value="1"/>
</dbReference>
<dbReference type="FunFam" id="3.30.70.140:FF:000001">
    <property type="entry name" value="Aspartate carbamoyltransferase regulatory chain"/>
    <property type="match status" value="1"/>
</dbReference>
<dbReference type="Gene3D" id="2.30.30.20">
    <property type="entry name" value="Aspartate carbamoyltransferase regulatory subunit, C-terminal domain"/>
    <property type="match status" value="1"/>
</dbReference>
<dbReference type="Gene3D" id="3.30.70.140">
    <property type="entry name" value="Aspartate carbamoyltransferase regulatory subunit, N-terminal domain"/>
    <property type="match status" value="1"/>
</dbReference>
<dbReference type="HAMAP" id="MF_00002">
    <property type="entry name" value="Asp_carb_tr_reg"/>
    <property type="match status" value="1"/>
</dbReference>
<dbReference type="InterPro" id="IPR020545">
    <property type="entry name" value="Asp_carbamoyltransf_reg_N"/>
</dbReference>
<dbReference type="InterPro" id="IPR002801">
    <property type="entry name" value="Asp_carbamoylTrfase_reg"/>
</dbReference>
<dbReference type="InterPro" id="IPR020542">
    <property type="entry name" value="Asp_carbamoyltrfase_reg_C"/>
</dbReference>
<dbReference type="InterPro" id="IPR036792">
    <property type="entry name" value="Asp_carbatrfase_reg_C_sf"/>
</dbReference>
<dbReference type="InterPro" id="IPR036793">
    <property type="entry name" value="Asp_carbatrfase_reg_N_sf"/>
</dbReference>
<dbReference type="NCBIfam" id="TIGR00240">
    <property type="entry name" value="ATCase_reg"/>
    <property type="match status" value="1"/>
</dbReference>
<dbReference type="PANTHER" id="PTHR35805">
    <property type="entry name" value="ASPARTATE CARBAMOYLTRANSFERASE REGULATORY CHAIN"/>
    <property type="match status" value="1"/>
</dbReference>
<dbReference type="PANTHER" id="PTHR35805:SF1">
    <property type="entry name" value="ASPARTATE CARBAMOYLTRANSFERASE REGULATORY CHAIN"/>
    <property type="match status" value="1"/>
</dbReference>
<dbReference type="Pfam" id="PF01948">
    <property type="entry name" value="PyrI"/>
    <property type="match status" value="1"/>
</dbReference>
<dbReference type="Pfam" id="PF02748">
    <property type="entry name" value="PyrI_C"/>
    <property type="match status" value="1"/>
</dbReference>
<dbReference type="SUPFAM" id="SSF57825">
    <property type="entry name" value="Aspartate carbamoyltransferase, Regulatory-chain, C-terminal domain"/>
    <property type="match status" value="1"/>
</dbReference>
<dbReference type="SUPFAM" id="SSF54893">
    <property type="entry name" value="Aspartate carbamoyltransferase, Regulatory-chain, N-terminal domain"/>
    <property type="match status" value="1"/>
</dbReference>
<keyword id="KW-0479">Metal-binding</keyword>
<keyword id="KW-0665">Pyrimidine biosynthesis</keyword>
<keyword id="KW-1185">Reference proteome</keyword>
<keyword id="KW-0862">Zinc</keyword>
<organism>
    <name type="scientific">Shigella flexneri</name>
    <dbReference type="NCBI Taxonomy" id="623"/>
    <lineage>
        <taxon>Bacteria</taxon>
        <taxon>Pseudomonadati</taxon>
        <taxon>Pseudomonadota</taxon>
        <taxon>Gammaproteobacteria</taxon>
        <taxon>Enterobacterales</taxon>
        <taxon>Enterobacteriaceae</taxon>
        <taxon>Shigella</taxon>
    </lineage>
</organism>
<reference key="1">
    <citation type="journal article" date="2002" name="Nucleic Acids Res.">
        <title>Genome sequence of Shigella flexneri 2a: insights into pathogenicity through comparison with genomes of Escherichia coli K12 and O157.</title>
        <authorList>
            <person name="Jin Q."/>
            <person name="Yuan Z."/>
            <person name="Xu J."/>
            <person name="Wang Y."/>
            <person name="Shen Y."/>
            <person name="Lu W."/>
            <person name="Wang J."/>
            <person name="Liu H."/>
            <person name="Yang J."/>
            <person name="Yang F."/>
            <person name="Zhang X."/>
            <person name="Zhang J."/>
            <person name="Yang G."/>
            <person name="Wu H."/>
            <person name="Qu D."/>
            <person name="Dong J."/>
            <person name="Sun L."/>
            <person name="Xue Y."/>
            <person name="Zhao A."/>
            <person name="Gao Y."/>
            <person name="Zhu J."/>
            <person name="Kan B."/>
            <person name="Ding K."/>
            <person name="Chen S."/>
            <person name="Cheng H."/>
            <person name="Yao Z."/>
            <person name="He B."/>
            <person name="Chen R."/>
            <person name="Ma D."/>
            <person name="Qiang B."/>
            <person name="Wen Y."/>
            <person name="Hou Y."/>
            <person name="Yu J."/>
        </authorList>
    </citation>
    <scope>NUCLEOTIDE SEQUENCE [LARGE SCALE GENOMIC DNA]</scope>
    <source>
        <strain>301 / Serotype 2a</strain>
    </source>
</reference>
<reference key="2">
    <citation type="journal article" date="2003" name="Infect. Immun.">
        <title>Complete genome sequence and comparative genomics of Shigella flexneri serotype 2a strain 2457T.</title>
        <authorList>
            <person name="Wei J."/>
            <person name="Goldberg M.B."/>
            <person name="Burland V."/>
            <person name="Venkatesan M.M."/>
            <person name="Deng W."/>
            <person name="Fournier G."/>
            <person name="Mayhew G.F."/>
            <person name="Plunkett G. III"/>
            <person name="Rose D.J."/>
            <person name="Darling A."/>
            <person name="Mau B."/>
            <person name="Perna N.T."/>
            <person name="Payne S.M."/>
            <person name="Runyen-Janecky L.J."/>
            <person name="Zhou S."/>
            <person name="Schwartz D.C."/>
            <person name="Blattner F.R."/>
        </authorList>
    </citation>
    <scope>NUCLEOTIDE SEQUENCE [LARGE SCALE GENOMIC DNA]</scope>
    <source>
        <strain>ATCC 700930 / 2457T / Serotype 2a</strain>
    </source>
</reference>
<sequence length="153" mass="17135">MTHDNKLQVEAIKRGTVIDHIPAQIGFKLLSLFKLTETDQRITIGLNLPSGEMGRKDLIKIENTFLSEEQVDQLALYAPQATVNRIDNYEVVGKSRPSLPERIDNVLVCPNSNCISHAEPVSSSFAVRKRANDIALKCKYCEKEFSHNVVLAN</sequence>
<proteinExistence type="inferred from homology"/>
<feature type="initiator methionine" description="Removed" evidence="1">
    <location>
        <position position="1"/>
    </location>
</feature>
<feature type="chain" id="PRO_0000142316" description="Aspartate carbamoyltransferase regulatory chain">
    <location>
        <begin position="2"/>
        <end position="153"/>
    </location>
</feature>
<feature type="binding site" evidence="2">
    <location>
        <position position="109"/>
    </location>
    <ligand>
        <name>Zn(2+)</name>
        <dbReference type="ChEBI" id="CHEBI:29105"/>
    </ligand>
</feature>
<feature type="binding site" evidence="2">
    <location>
        <position position="114"/>
    </location>
    <ligand>
        <name>Zn(2+)</name>
        <dbReference type="ChEBI" id="CHEBI:29105"/>
    </ligand>
</feature>
<feature type="binding site" evidence="2">
    <location>
        <position position="138"/>
    </location>
    <ligand>
        <name>Zn(2+)</name>
        <dbReference type="ChEBI" id="CHEBI:29105"/>
    </ligand>
</feature>
<feature type="binding site" evidence="2">
    <location>
        <position position="141"/>
    </location>
    <ligand>
        <name>Zn(2+)</name>
        <dbReference type="ChEBI" id="CHEBI:29105"/>
    </ligand>
</feature>
<name>PYRI_SHIFL</name>
<comment type="function">
    <text evidence="2">Involved in allosteric regulation of aspartate carbamoyltransferase.</text>
</comment>
<comment type="cofactor">
    <cofactor evidence="2">
        <name>Zn(2+)</name>
        <dbReference type="ChEBI" id="CHEBI:29105"/>
    </cofactor>
    <text evidence="2">Binds 1 zinc ion per subunit.</text>
</comment>
<comment type="subunit">
    <text evidence="1">Heterododecamer (2C3:3R2) of six catalytic PyrB chains organized as two trimers (C3), and six regulatory PyrI chains organized as three dimers (R2).</text>
</comment>
<comment type="similarity">
    <text evidence="2">Belongs to the PyrI family.</text>
</comment>
<accession>Q83IL8</accession>
<accession>Q7UAP1</accession>
<gene>
    <name evidence="2" type="primary">pyrI</name>
    <name type="ordered locus">SF4246</name>
    <name type="ordered locus">S4508</name>
</gene>
<evidence type="ECO:0000250" key="1"/>
<evidence type="ECO:0000255" key="2">
    <source>
        <dbReference type="HAMAP-Rule" id="MF_00002"/>
    </source>
</evidence>